<protein>
    <recommendedName>
        <fullName evidence="1">Large ribosomal subunit protein uL24</fullName>
    </recommendedName>
    <alternativeName>
        <fullName evidence="2">50S ribosomal protein L24</fullName>
    </alternativeName>
</protein>
<keyword id="KW-1185">Reference proteome</keyword>
<keyword id="KW-0687">Ribonucleoprotein</keyword>
<keyword id="KW-0689">Ribosomal protein</keyword>
<keyword id="KW-0694">RNA-binding</keyword>
<keyword id="KW-0699">rRNA-binding</keyword>
<dbReference type="EMBL" id="CP000034">
    <property type="protein sequence ID" value="ABB63463.1"/>
    <property type="molecule type" value="Genomic_DNA"/>
</dbReference>
<dbReference type="RefSeq" id="WP_000729181.1">
    <property type="nucleotide sequence ID" value="NC_007606.1"/>
</dbReference>
<dbReference type="RefSeq" id="YP_404954.1">
    <property type="nucleotide sequence ID" value="NC_007606.1"/>
</dbReference>
<dbReference type="SMR" id="Q32B42"/>
<dbReference type="STRING" id="300267.SDY_3485"/>
<dbReference type="EnsemblBacteria" id="ABB63463">
    <property type="protein sequence ID" value="ABB63463"/>
    <property type="gene ID" value="SDY_3485"/>
</dbReference>
<dbReference type="KEGG" id="sdy:SDY_3485"/>
<dbReference type="PATRIC" id="fig|300267.13.peg.4138"/>
<dbReference type="HOGENOM" id="CLU_093315_2_2_6"/>
<dbReference type="Proteomes" id="UP000002716">
    <property type="component" value="Chromosome"/>
</dbReference>
<dbReference type="GO" id="GO:0005829">
    <property type="term" value="C:cytosol"/>
    <property type="evidence" value="ECO:0007669"/>
    <property type="project" value="UniProtKB-ARBA"/>
</dbReference>
<dbReference type="GO" id="GO:1990904">
    <property type="term" value="C:ribonucleoprotein complex"/>
    <property type="evidence" value="ECO:0007669"/>
    <property type="project" value="UniProtKB-KW"/>
</dbReference>
<dbReference type="GO" id="GO:0005840">
    <property type="term" value="C:ribosome"/>
    <property type="evidence" value="ECO:0007669"/>
    <property type="project" value="UniProtKB-KW"/>
</dbReference>
<dbReference type="GO" id="GO:0019843">
    <property type="term" value="F:rRNA binding"/>
    <property type="evidence" value="ECO:0007669"/>
    <property type="project" value="UniProtKB-UniRule"/>
</dbReference>
<dbReference type="GO" id="GO:0003735">
    <property type="term" value="F:structural constituent of ribosome"/>
    <property type="evidence" value="ECO:0007669"/>
    <property type="project" value="InterPro"/>
</dbReference>
<dbReference type="GO" id="GO:0006412">
    <property type="term" value="P:translation"/>
    <property type="evidence" value="ECO:0007669"/>
    <property type="project" value="UniProtKB-UniRule"/>
</dbReference>
<dbReference type="CDD" id="cd06089">
    <property type="entry name" value="KOW_RPL26"/>
    <property type="match status" value="1"/>
</dbReference>
<dbReference type="FunFam" id="2.30.30.30:FF:000004">
    <property type="entry name" value="50S ribosomal protein L24"/>
    <property type="match status" value="1"/>
</dbReference>
<dbReference type="Gene3D" id="2.30.30.30">
    <property type="match status" value="1"/>
</dbReference>
<dbReference type="HAMAP" id="MF_01326_B">
    <property type="entry name" value="Ribosomal_uL24_B"/>
    <property type="match status" value="1"/>
</dbReference>
<dbReference type="InterPro" id="IPR005824">
    <property type="entry name" value="KOW"/>
</dbReference>
<dbReference type="InterPro" id="IPR014722">
    <property type="entry name" value="Rib_uL2_dom2"/>
</dbReference>
<dbReference type="InterPro" id="IPR003256">
    <property type="entry name" value="Ribosomal_uL24"/>
</dbReference>
<dbReference type="InterPro" id="IPR005825">
    <property type="entry name" value="Ribosomal_uL24_CS"/>
</dbReference>
<dbReference type="InterPro" id="IPR041988">
    <property type="entry name" value="Ribosomal_uL24_KOW"/>
</dbReference>
<dbReference type="InterPro" id="IPR008991">
    <property type="entry name" value="Translation_prot_SH3-like_sf"/>
</dbReference>
<dbReference type="NCBIfam" id="TIGR01079">
    <property type="entry name" value="rplX_bact"/>
    <property type="match status" value="1"/>
</dbReference>
<dbReference type="PANTHER" id="PTHR12903">
    <property type="entry name" value="MITOCHONDRIAL RIBOSOMAL PROTEIN L24"/>
    <property type="match status" value="1"/>
</dbReference>
<dbReference type="Pfam" id="PF00467">
    <property type="entry name" value="KOW"/>
    <property type="match status" value="1"/>
</dbReference>
<dbReference type="Pfam" id="PF17136">
    <property type="entry name" value="ribosomal_L24"/>
    <property type="match status" value="1"/>
</dbReference>
<dbReference type="SMART" id="SM00739">
    <property type="entry name" value="KOW"/>
    <property type="match status" value="1"/>
</dbReference>
<dbReference type="SUPFAM" id="SSF50104">
    <property type="entry name" value="Translation proteins SH3-like domain"/>
    <property type="match status" value="1"/>
</dbReference>
<dbReference type="PROSITE" id="PS01108">
    <property type="entry name" value="RIBOSOMAL_L24"/>
    <property type="match status" value="1"/>
</dbReference>
<organism>
    <name type="scientific">Shigella dysenteriae serotype 1 (strain Sd197)</name>
    <dbReference type="NCBI Taxonomy" id="300267"/>
    <lineage>
        <taxon>Bacteria</taxon>
        <taxon>Pseudomonadati</taxon>
        <taxon>Pseudomonadota</taxon>
        <taxon>Gammaproteobacteria</taxon>
        <taxon>Enterobacterales</taxon>
        <taxon>Enterobacteriaceae</taxon>
        <taxon>Shigella</taxon>
    </lineage>
</organism>
<comment type="function">
    <text evidence="1">One of two assembly initiator proteins, it binds directly to the 5'-end of the 23S rRNA, where it nucleates assembly of the 50S subunit.</text>
</comment>
<comment type="function">
    <text evidence="1">One of the proteins that surrounds the polypeptide exit tunnel on the outside of the subunit.</text>
</comment>
<comment type="subunit">
    <text evidence="1">Part of the 50S ribosomal subunit.</text>
</comment>
<comment type="similarity">
    <text evidence="1">Belongs to the universal ribosomal protein uL24 family.</text>
</comment>
<feature type="chain" id="PRO_0000241661" description="Large ribosomal subunit protein uL24">
    <location>
        <begin position="1"/>
        <end position="104"/>
    </location>
</feature>
<accession>Q32B42</accession>
<evidence type="ECO:0000255" key="1">
    <source>
        <dbReference type="HAMAP-Rule" id="MF_01326"/>
    </source>
</evidence>
<evidence type="ECO:0000305" key="2"/>
<name>RL24_SHIDS</name>
<reference key="1">
    <citation type="journal article" date="2005" name="Nucleic Acids Res.">
        <title>Genome dynamics and diversity of Shigella species, the etiologic agents of bacillary dysentery.</title>
        <authorList>
            <person name="Yang F."/>
            <person name="Yang J."/>
            <person name="Zhang X."/>
            <person name="Chen L."/>
            <person name="Jiang Y."/>
            <person name="Yan Y."/>
            <person name="Tang X."/>
            <person name="Wang J."/>
            <person name="Xiong Z."/>
            <person name="Dong J."/>
            <person name="Xue Y."/>
            <person name="Zhu Y."/>
            <person name="Xu X."/>
            <person name="Sun L."/>
            <person name="Chen S."/>
            <person name="Nie H."/>
            <person name="Peng J."/>
            <person name="Xu J."/>
            <person name="Wang Y."/>
            <person name="Yuan Z."/>
            <person name="Wen Y."/>
            <person name="Yao Z."/>
            <person name="Shen Y."/>
            <person name="Qiang B."/>
            <person name="Hou Y."/>
            <person name="Yu J."/>
            <person name="Jin Q."/>
        </authorList>
    </citation>
    <scope>NUCLEOTIDE SEQUENCE [LARGE SCALE GENOMIC DNA]</scope>
    <source>
        <strain>Sd197</strain>
    </source>
</reference>
<sequence length="104" mass="11290">MAAKIRRDDEVIVLTGKDKGKRGKVKNVLSSGKVIVEGINLVKKHQKAVPALNQPGGIVEKEAAIQVSNVAIFNAATGKADRVGFRFEDGKKVRFFKSNSETIK</sequence>
<proteinExistence type="inferred from homology"/>
<gene>
    <name evidence="1" type="primary">rplX</name>
    <name type="ordered locus">SDY_3485</name>
</gene>